<gene>
    <name evidence="6" type="primary">FDB2</name>
    <name evidence="7" type="synonym">NAT1</name>
    <name type="ORF">FVEG_12636</name>
</gene>
<evidence type="ECO:0000250" key="1">
    <source>
        <dbReference type="UniProtKB" id="P9WJI5"/>
    </source>
</evidence>
<evidence type="ECO:0000269" key="2">
    <source>
    </source>
</evidence>
<evidence type="ECO:0000269" key="3">
    <source>
    </source>
</evidence>
<evidence type="ECO:0000269" key="4">
    <source>
    </source>
</evidence>
<evidence type="ECO:0000269" key="5">
    <source>
    </source>
</evidence>
<evidence type="ECO:0000303" key="6">
    <source>
    </source>
</evidence>
<evidence type="ECO:0000303" key="7">
    <source>
    </source>
</evidence>
<evidence type="ECO:0000305" key="8"/>
<evidence type="ECO:0000305" key="9">
    <source>
    </source>
</evidence>
<reference key="1">
    <citation type="journal article" date="2010" name="Nature">
        <title>Comparative genomics reveals mobile pathogenicity chromosomes in Fusarium.</title>
        <authorList>
            <person name="Ma L.-J."/>
            <person name="van der Does H.C."/>
            <person name="Borkovich K.A."/>
            <person name="Coleman J.J."/>
            <person name="Daboussi M.-J."/>
            <person name="Di Pietro A."/>
            <person name="Dufresne M."/>
            <person name="Freitag M."/>
            <person name="Grabherr M."/>
            <person name="Henrissat B."/>
            <person name="Houterman P.M."/>
            <person name="Kang S."/>
            <person name="Shim W.-B."/>
            <person name="Woloshuk C."/>
            <person name="Xie X."/>
            <person name="Xu J.-R."/>
            <person name="Antoniw J."/>
            <person name="Baker S.E."/>
            <person name="Bluhm B.H."/>
            <person name="Breakspear A."/>
            <person name="Brown D.W."/>
            <person name="Butchko R.A.E."/>
            <person name="Chapman S."/>
            <person name="Coulson R."/>
            <person name="Coutinho P.M."/>
            <person name="Danchin E.G.J."/>
            <person name="Diener A."/>
            <person name="Gale L.R."/>
            <person name="Gardiner D.M."/>
            <person name="Goff S."/>
            <person name="Hammond-Kosack K.E."/>
            <person name="Hilburn K."/>
            <person name="Hua-Van A."/>
            <person name="Jonkers W."/>
            <person name="Kazan K."/>
            <person name="Kodira C.D."/>
            <person name="Koehrsen M."/>
            <person name="Kumar L."/>
            <person name="Lee Y.-H."/>
            <person name="Li L."/>
            <person name="Manners J.M."/>
            <person name="Miranda-Saavedra D."/>
            <person name="Mukherjee M."/>
            <person name="Park G."/>
            <person name="Park J."/>
            <person name="Park S.-Y."/>
            <person name="Proctor R.H."/>
            <person name="Regev A."/>
            <person name="Ruiz-Roldan M.C."/>
            <person name="Sain D."/>
            <person name="Sakthikumar S."/>
            <person name="Sykes S."/>
            <person name="Schwartz D.C."/>
            <person name="Turgeon B.G."/>
            <person name="Wapinski I."/>
            <person name="Yoder O."/>
            <person name="Young S."/>
            <person name="Zeng Q."/>
            <person name="Zhou S."/>
            <person name="Galagan J."/>
            <person name="Cuomo C.A."/>
            <person name="Kistler H.C."/>
            <person name="Rep M."/>
        </authorList>
    </citation>
    <scope>NUCLEOTIDE SEQUENCE [LARGE SCALE GENOMIC DNA]</scope>
    <source>
        <strain>M3125 / FGSC 7600</strain>
    </source>
</reference>
<reference key="2">
    <citation type="journal article" date="2002" name="Mol. Plant Microbe Interact.">
        <title>Fdb1 and Fdb2, Fusarium verticillioides loci necessary for detoxification of preformed antimicrobials from corn.</title>
        <authorList>
            <person name="Glenn A.E."/>
            <person name="Gold S.E."/>
            <person name="Bacon C.W."/>
        </authorList>
    </citation>
    <scope>FUNCTION</scope>
</reference>
<reference key="3">
    <citation type="journal article" date="2003" name="Appl. Environ. Microbiol.">
        <title>Identification of intermediate and branch metabolites resulting from biotransformation of 2-benzoxazolinone by Fusarium verticillioides.</title>
        <authorList>
            <person name="Glenn A.E."/>
            <person name="Meredith F.I."/>
            <person name="Morrison W.H. III"/>
            <person name="Bacon C.W."/>
        </authorList>
    </citation>
    <scope>FUNCTION</scope>
</reference>
<reference key="4">
    <citation type="journal article" date="2009" name="J. Appl. Microbiol.">
        <title>FDB2 encodes a member of the arylamine N-acetyltransferase family and is necessary for biotransformation of benzoxazolinones by Fusarium verticillioides.</title>
        <authorList>
            <person name="Glenn A.E."/>
            <person name="Bacon C.W."/>
        </authorList>
    </citation>
    <scope>FUNCTION</scope>
    <scope>DISRUPTION PHENOTYPE</scope>
    <scope>INDUCTION</scope>
    <scope>PATHWAY</scope>
</reference>
<reference key="5">
    <citation type="journal article" date="2016" name="PLoS ONE">
        <title>Two horizontally transferred xenobiotic resistance gene clusters associated with detoxification of benzoxazolinones by Fusarium species.</title>
        <authorList>
            <person name="Glenn A.E."/>
            <person name="Davis C.B."/>
            <person name="Gao M."/>
            <person name="Gold S.E."/>
            <person name="Mitchell T.R."/>
            <person name="Proctor R.H."/>
            <person name="Stewart J.E."/>
            <person name="Snook M.E."/>
        </authorList>
    </citation>
    <scope>FUNCTION</scope>
</reference>
<sequence length="345" mass="39734">MARLEDPTALTQLPDESARVRYTSSELQDYFETLKFPQRFLDLGNSVLKDPSLARTKENGLPLLQAITRYHTCNVPFENLVLHYDPHKIVTLDPAELYTKIVTRRRGGRCMENNIFLGTALRSLGYEVRNCGGRVSRAMSPYPEVRKNQSATYDGWNHMLLLVFLGDEWYGVDVGMGSMGPNLPFPLQDGFESLSIAPREIRIQKRSISETHATGPSHATKMWCYDVCYNPAESKKTWTPVYCFTETEFLPQDYEVMSWFTSTNPRSFFTRYITCTKMIMDEDKEVIIGNLTLFKDTVRETIGSDRKVVKKFETEEERIKGLVEIFDVNLTEEEKNSLPQEKRLA</sequence>
<feature type="chain" id="PRO_0000454595" description="N-malonyltransferase FDB2">
    <location>
        <begin position="1"/>
        <end position="345"/>
    </location>
</feature>
<feature type="active site" description="Acyl-thioester intermediate" evidence="1">
    <location>
        <position position="110"/>
    </location>
</feature>
<feature type="active site" description="Proton acceptor" evidence="1">
    <location>
        <position position="158"/>
    </location>
</feature>
<feature type="active site" evidence="1">
    <location>
        <position position="173"/>
    </location>
</feature>
<comment type="function">
    <text evidence="2 3 4 5 9">N-malonyltransferase; part of the Fusarium detoxification of benzoxazolinone cluster 2 (FDB2) involved in the degradation of benzoxazolinones produced by the host plant (PubMed:19302487, PubMed:26808652). Maize, wheat, and rye produce the 2 benzoxazinone phytoanticipins 2,4-dihy-droxy-7-methoxy-1,4-benzoxazin-3-one (DIMBOA) and 2,4-dihydroxy-1,4-benzoxazin-3-one (DIBOA) that, due to their inherent instability once released, spontaneously degrade to the more stable corresponding benzoxazolinones, 6-methoxy-2-benzoxazolinone (MBOA) and 2-benzoxazolinone (BOA), respectively (PubMed:11876429). The first step in the detoxification of benzoxazolinones involves the hydrolysis of the cyclic ester bond of benzoxazolinones by the FDB1 cluster gamma-lactamase MBL1 to aminophenols (PubMed:12788712, PubMed:26808652). MBL1 is able to convert BOA into 2-aminophenol (2-AP), as well as MBOA into 5-methoxy-2-aminophenol (2-AMP) (PubMed:12788712, PubMed:26808652). The FDB2 cluster N-malonyltransferase FDB2/NAT1 then metabolizes aminophenols via N-malonylation to non-toxic malonamic acids (PubMed:12788712, PubMed:19302487). FDB2/NAT1 converts 2-AP into N-(2-hydroxyphenyl) malonamic acid (HPMA) and 2-AMP into N-(2-hydroxy-4-methoxyphenyl) malonamic acid (HMPMA) (PubMed:12788712, PubMed:19302487). The duplicated dienlactone hydrolases DLH1 and DLH2 may provide redundant function for hydrolyzing the lactone moiety in the BOA molecule (Probable). The roles of the amidases an other enzymes encoded by the 2 FDB clusters have not been identified so far (Probable).</text>
</comment>
<comment type="pathway">
    <text evidence="4">Xenobiotic degradation.</text>
</comment>
<comment type="induction">
    <text evidence="4">Expression is induced in response to 2-benzoxasolinone (BOA) exposure.</text>
</comment>
<comment type="disruption phenotype">
    <text evidence="4">Eliminates the ability to metabolize BOA.</text>
</comment>
<comment type="miscellaneous">
    <text evidence="9">Fusarium verticillioides possesses 2 unlinked loci, FDB1 and FDB2, necessary for detoxification of antimicrobial compounds produced by maize, including 2-benzoxazolinone (BOA) (Probable). The FDB2 cluster arose as a duplication of the FDB1 cluster with rearrangement and expansion by incorporating additional genes (Probable).</text>
</comment>
<comment type="similarity">
    <text evidence="8">Belongs to the arylamine N-acetyltransferase family.</text>
</comment>
<proteinExistence type="evidence at transcript level"/>
<accession>W7NDP8</accession>
<name>FDB2_GIBM7</name>
<dbReference type="EC" id="2.3.1.-" evidence="4"/>
<dbReference type="EMBL" id="CM000580">
    <property type="protein sequence ID" value="EWG54417.1"/>
    <property type="molecule type" value="Genomic_DNA"/>
</dbReference>
<dbReference type="RefSeq" id="XP_018760608.1">
    <property type="nucleotide sequence ID" value="XM_018901986.1"/>
</dbReference>
<dbReference type="SMR" id="W7NDP8"/>
<dbReference type="EnsemblFungi" id="FVEG_12636T0">
    <property type="protein sequence ID" value="FVEG_12636T0"/>
    <property type="gene ID" value="FVEG_12636"/>
</dbReference>
<dbReference type="GeneID" id="30070064"/>
<dbReference type="KEGG" id="fvr:FVEG_12636"/>
<dbReference type="VEuPathDB" id="FungiDB:FVEG_12636"/>
<dbReference type="eggNOG" id="ENOG502RD0D">
    <property type="taxonomic scope" value="Eukaryota"/>
</dbReference>
<dbReference type="HOGENOM" id="CLU_049918_2_0_1"/>
<dbReference type="OMA" id="ELHYSAH"/>
<dbReference type="OrthoDB" id="4776at110618"/>
<dbReference type="Proteomes" id="UP000009096">
    <property type="component" value="Chromosome 3"/>
</dbReference>
<dbReference type="GO" id="GO:0004060">
    <property type="term" value="F:arylamine N-acetyltransferase activity"/>
    <property type="evidence" value="ECO:0007669"/>
    <property type="project" value="UniProtKB-EC"/>
</dbReference>
<dbReference type="Gene3D" id="3.30.2140.20">
    <property type="match status" value="1"/>
</dbReference>
<dbReference type="InterPro" id="IPR001447">
    <property type="entry name" value="Arylamine_N-AcTrfase"/>
</dbReference>
<dbReference type="InterPro" id="IPR053710">
    <property type="entry name" value="Arylamine_NAT_domain_sf"/>
</dbReference>
<dbReference type="InterPro" id="IPR038765">
    <property type="entry name" value="Papain-like_cys_pep_sf"/>
</dbReference>
<dbReference type="PANTHER" id="PTHR11786:SF0">
    <property type="entry name" value="ARYLAMINE N-ACETYLTRANSFERASE 4-RELATED"/>
    <property type="match status" value="1"/>
</dbReference>
<dbReference type="PANTHER" id="PTHR11786">
    <property type="entry name" value="N-HYDROXYARYLAMINE O-ACETYLTRANSFERASE"/>
    <property type="match status" value="1"/>
</dbReference>
<dbReference type="Pfam" id="PF00797">
    <property type="entry name" value="Acetyltransf_2"/>
    <property type="match status" value="1"/>
</dbReference>
<dbReference type="PRINTS" id="PR01543">
    <property type="entry name" value="ANATRNSFRASE"/>
</dbReference>
<dbReference type="SUPFAM" id="SSF54001">
    <property type="entry name" value="Cysteine proteinases"/>
    <property type="match status" value="1"/>
</dbReference>
<organism>
    <name type="scientific">Gibberella moniliformis (strain M3125 / FGSC 7600)</name>
    <name type="common">Maize ear and stalk rot fungus</name>
    <name type="synonym">Fusarium verticillioides</name>
    <dbReference type="NCBI Taxonomy" id="334819"/>
    <lineage>
        <taxon>Eukaryota</taxon>
        <taxon>Fungi</taxon>
        <taxon>Dikarya</taxon>
        <taxon>Ascomycota</taxon>
        <taxon>Pezizomycotina</taxon>
        <taxon>Sordariomycetes</taxon>
        <taxon>Hypocreomycetidae</taxon>
        <taxon>Hypocreales</taxon>
        <taxon>Nectriaceae</taxon>
        <taxon>Fusarium</taxon>
        <taxon>Fusarium fujikuroi species complex</taxon>
    </lineage>
</organism>
<keyword id="KW-0012">Acyltransferase</keyword>
<keyword id="KW-1185">Reference proteome</keyword>
<keyword id="KW-0808">Transferase</keyword>
<protein>
    <recommendedName>
        <fullName evidence="6">N-malonyltransferase FDB2</fullName>
        <ecNumber evidence="4">2.3.1.-</ecNumber>
    </recommendedName>
    <alternativeName>
        <fullName evidence="6">Fusarium detoxification of benzoxazolinone cluster 2 protein NAT1</fullName>
        <shortName evidence="6">FDB2 cluster protein NAT1</shortName>
    </alternativeName>
</protein>